<reference key="1">
    <citation type="journal article" date="1995" name="Science">
        <title>Whole-genome random sequencing and assembly of Haemophilus influenzae Rd.</title>
        <authorList>
            <person name="Fleischmann R.D."/>
            <person name="Adams M.D."/>
            <person name="White O."/>
            <person name="Clayton R.A."/>
            <person name="Kirkness E.F."/>
            <person name="Kerlavage A.R."/>
            <person name="Bult C.J."/>
            <person name="Tomb J.-F."/>
            <person name="Dougherty B.A."/>
            <person name="Merrick J.M."/>
            <person name="McKenney K."/>
            <person name="Sutton G.G."/>
            <person name="FitzHugh W."/>
            <person name="Fields C.A."/>
            <person name="Gocayne J.D."/>
            <person name="Scott J.D."/>
            <person name="Shirley R."/>
            <person name="Liu L.-I."/>
            <person name="Glodek A."/>
            <person name="Kelley J.M."/>
            <person name="Weidman J.F."/>
            <person name="Phillips C.A."/>
            <person name="Spriggs T."/>
            <person name="Hedblom E."/>
            <person name="Cotton M.D."/>
            <person name="Utterback T.R."/>
            <person name="Hanna M.C."/>
            <person name="Nguyen D.T."/>
            <person name="Saudek D.M."/>
            <person name="Brandon R.C."/>
            <person name="Fine L.D."/>
            <person name="Fritchman J.L."/>
            <person name="Fuhrmann J.L."/>
            <person name="Geoghagen N.S.M."/>
            <person name="Gnehm C.L."/>
            <person name="McDonald L.A."/>
            <person name="Small K.V."/>
            <person name="Fraser C.M."/>
            <person name="Smith H.O."/>
            <person name="Venter J.C."/>
        </authorList>
    </citation>
    <scope>NUCLEOTIDE SEQUENCE [LARGE SCALE GENOMIC DNA]</scope>
    <source>
        <strain>ATCC 51907 / DSM 11121 / KW20 / Rd</strain>
    </source>
</reference>
<evidence type="ECO:0000255" key="1">
    <source>
        <dbReference type="PROSITE-ProRule" id="PRU01246"/>
    </source>
</evidence>
<evidence type="ECO:0000255" key="2">
    <source>
        <dbReference type="PROSITE-ProRule" id="PRU01248"/>
    </source>
</evidence>
<evidence type="ECO:0000305" key="3"/>
<organism>
    <name type="scientific">Haemophilus influenzae (strain ATCC 51907 / DSM 11121 / KW20 / Rd)</name>
    <dbReference type="NCBI Taxonomy" id="71421"/>
    <lineage>
        <taxon>Bacteria</taxon>
        <taxon>Pseudomonadati</taxon>
        <taxon>Pseudomonadota</taxon>
        <taxon>Gammaproteobacteria</taxon>
        <taxon>Pasteurellales</taxon>
        <taxon>Pasteurellaceae</taxon>
        <taxon>Haemophilus</taxon>
    </lineage>
</organism>
<keyword id="KW-0229">DNA integration</keyword>
<keyword id="KW-0233">DNA recombination</keyword>
<keyword id="KW-0238">DNA-binding</keyword>
<keyword id="KW-1185">Reference proteome</keyword>
<keyword id="KW-1179">Viral genome integration</keyword>
<keyword id="KW-1160">Virus entry into host cell</keyword>
<protein>
    <recommendedName>
        <fullName>Putative integrase/recombinase HI_1572</fullName>
    </recommendedName>
</protein>
<name>Y1572_HAEIN</name>
<accession>P46495</accession>
<gene>
    <name type="ordered locus">HI_1572</name>
</gene>
<comment type="similarity">
    <text evidence="3">Belongs to the 'phage' integrase family.</text>
</comment>
<comment type="sequence caution" evidence="3">
    <conflict type="erroneous termination">
        <sequence resource="EMBL" id="L42023"/>
    </conflict>
    <text>Truncated C-terminus.</text>
</comment>
<sequence length="366" mass="42415">MATIIKNGKRWHAQVRKFGVSKSAIFLTQADAKKWAEMLEKQLESGKYNEIPDITLDELIDKYLKEVTVTKRGKREERIRLLRLSRTPLAAISLQEIGKAHFREWRNQRLKEVSPTTVLRERSSLSALMAKTIEWDFITENPLKYLEKPKAPAPRTRRYNEHEIERLIFVSGYDVEHIEPPKTLQNCTGAAFLFAIETAMRAGEIASLTWNNINFEKRTTFLPITKNGHSRTVPLSVKAIEILQHLTSVKTESDPRVFQMEARQLDHNFRKLKKMEGLENANLHFHDTRRERLAEKVDVMVLAKISGHRDLSILQNTYYAPDMAEGYKTKAGYDLTPTKGLSQRNFFFFNENFIVFTTNPPIVIKL</sequence>
<feature type="chain" id="PRO_0000197538" description="Putative integrase/recombinase HI_1572">
    <location>
        <begin position="1"/>
        <end position="366"/>
    </location>
</feature>
<feature type="domain" description="Core-binding (CB)" evidence="2">
    <location>
        <begin position="54"/>
        <end position="133"/>
    </location>
</feature>
<feature type="domain" description="Tyr recombinase" evidence="1">
    <location>
        <begin position="168"/>
        <end position="331"/>
    </location>
</feature>
<feature type="active site" evidence="1">
    <location>
        <position position="201"/>
    </location>
</feature>
<feature type="active site" evidence="1">
    <location>
        <position position="226"/>
    </location>
</feature>
<feature type="active site" evidence="1">
    <location>
        <position position="308"/>
    </location>
</feature>
<feature type="active site" description="O-(3'-phospho-DNA)-tyrosine intermediate" evidence="1">
    <location>
        <position position="318"/>
    </location>
</feature>
<proteinExistence type="inferred from homology"/>
<dbReference type="EMBL" id="L42023">
    <property type="status" value="NOT_ANNOTATED_CDS"/>
    <property type="molecule type" value="Genomic_DNA"/>
</dbReference>
<dbReference type="SMR" id="P46495"/>
<dbReference type="Proteomes" id="UP000000579">
    <property type="component" value="Chromosome"/>
</dbReference>
<dbReference type="GO" id="GO:0003677">
    <property type="term" value="F:DNA binding"/>
    <property type="evidence" value="ECO:0007669"/>
    <property type="project" value="UniProtKB-KW"/>
</dbReference>
<dbReference type="GO" id="GO:0009009">
    <property type="term" value="F:site-specific recombinase activity"/>
    <property type="evidence" value="ECO:0000318"/>
    <property type="project" value="GO_Central"/>
</dbReference>
<dbReference type="GO" id="GO:0007059">
    <property type="term" value="P:chromosome segregation"/>
    <property type="evidence" value="ECO:0000318"/>
    <property type="project" value="GO_Central"/>
</dbReference>
<dbReference type="GO" id="GO:0006310">
    <property type="term" value="P:DNA recombination"/>
    <property type="evidence" value="ECO:0000318"/>
    <property type="project" value="GO_Central"/>
</dbReference>
<dbReference type="GO" id="GO:0075713">
    <property type="term" value="P:establishment of integrated proviral latency"/>
    <property type="evidence" value="ECO:0007669"/>
    <property type="project" value="UniProtKB-KW"/>
</dbReference>
<dbReference type="GO" id="GO:0046718">
    <property type="term" value="P:symbiont entry into host cell"/>
    <property type="evidence" value="ECO:0007669"/>
    <property type="project" value="UniProtKB-KW"/>
</dbReference>
<dbReference type="GO" id="GO:0044826">
    <property type="term" value="P:viral genome integration into host DNA"/>
    <property type="evidence" value="ECO:0007669"/>
    <property type="project" value="UniProtKB-KW"/>
</dbReference>
<dbReference type="CDD" id="cd00796">
    <property type="entry name" value="INT_Rci_Hp1_C"/>
    <property type="match status" value="1"/>
</dbReference>
<dbReference type="Gene3D" id="1.10.150.130">
    <property type="match status" value="1"/>
</dbReference>
<dbReference type="Gene3D" id="1.10.443.10">
    <property type="entry name" value="Intergrase catalytic core"/>
    <property type="match status" value="1"/>
</dbReference>
<dbReference type="InterPro" id="IPR044068">
    <property type="entry name" value="CB"/>
</dbReference>
<dbReference type="InterPro" id="IPR011010">
    <property type="entry name" value="DNA_brk_join_enz"/>
</dbReference>
<dbReference type="InterPro" id="IPR013762">
    <property type="entry name" value="Integrase-like_cat_sf"/>
</dbReference>
<dbReference type="InterPro" id="IPR002104">
    <property type="entry name" value="Integrase_catalytic"/>
</dbReference>
<dbReference type="InterPro" id="IPR010998">
    <property type="entry name" value="Integrase_recombinase_N"/>
</dbReference>
<dbReference type="InterPro" id="IPR050090">
    <property type="entry name" value="Tyrosine_recombinase_XerCD"/>
</dbReference>
<dbReference type="PANTHER" id="PTHR30349:SF94">
    <property type="entry name" value="INTEGRASE_RECOMBINASE HI_1414-RELATED"/>
    <property type="match status" value="1"/>
</dbReference>
<dbReference type="PANTHER" id="PTHR30349">
    <property type="entry name" value="PHAGE INTEGRASE-RELATED"/>
    <property type="match status" value="1"/>
</dbReference>
<dbReference type="Pfam" id="PF00589">
    <property type="entry name" value="Phage_integrase"/>
    <property type="match status" value="1"/>
</dbReference>
<dbReference type="SUPFAM" id="SSF56349">
    <property type="entry name" value="DNA breaking-rejoining enzymes"/>
    <property type="match status" value="1"/>
</dbReference>
<dbReference type="PROSITE" id="PS51900">
    <property type="entry name" value="CB"/>
    <property type="match status" value="1"/>
</dbReference>
<dbReference type="PROSITE" id="PS51898">
    <property type="entry name" value="TYR_RECOMBINASE"/>
    <property type="match status" value="1"/>
</dbReference>